<feature type="chain" id="PRO_0000372250" description="Putative antiporter subunit mnhC2">
    <location>
        <begin position="1"/>
        <end position="114"/>
    </location>
</feature>
<feature type="transmembrane region" description="Helical" evidence="2">
    <location>
        <begin position="3"/>
        <end position="23"/>
    </location>
</feature>
<feature type="transmembrane region" description="Helical" evidence="2">
    <location>
        <begin position="28"/>
        <end position="48"/>
    </location>
</feature>
<feature type="transmembrane region" description="Helical" evidence="2">
    <location>
        <begin position="72"/>
        <end position="92"/>
    </location>
</feature>
<evidence type="ECO:0000250" key="1"/>
<evidence type="ECO:0000255" key="2"/>
<evidence type="ECO:0000305" key="3"/>
<dbReference type="EMBL" id="CP000736">
    <property type="protein sequence ID" value="ABR51519.1"/>
    <property type="molecule type" value="Genomic_DNA"/>
</dbReference>
<dbReference type="SMR" id="A6TZA1"/>
<dbReference type="KEGG" id="sah:SaurJH1_0662"/>
<dbReference type="HOGENOM" id="CLU_082058_3_1_9"/>
<dbReference type="GO" id="GO:0005886">
    <property type="term" value="C:plasma membrane"/>
    <property type="evidence" value="ECO:0007669"/>
    <property type="project" value="UniProtKB-SubCell"/>
</dbReference>
<dbReference type="GO" id="GO:0015297">
    <property type="term" value="F:antiporter activity"/>
    <property type="evidence" value="ECO:0007669"/>
    <property type="project" value="UniProtKB-KW"/>
</dbReference>
<dbReference type="GO" id="GO:0006811">
    <property type="term" value="P:monoatomic ion transport"/>
    <property type="evidence" value="ECO:0007669"/>
    <property type="project" value="UniProtKB-KW"/>
</dbReference>
<dbReference type="Gene3D" id="1.10.287.3510">
    <property type="match status" value="1"/>
</dbReference>
<dbReference type="InterPro" id="IPR050601">
    <property type="entry name" value="CPA3_antiporter_subunitC"/>
</dbReference>
<dbReference type="InterPro" id="IPR039428">
    <property type="entry name" value="NUOK/Mnh_C1-like"/>
</dbReference>
<dbReference type="NCBIfam" id="NF009303">
    <property type="entry name" value="PRK12660.1"/>
    <property type="match status" value="1"/>
</dbReference>
<dbReference type="PANTHER" id="PTHR34583">
    <property type="entry name" value="ANTIPORTER SUBUNIT MNHC2-RELATED"/>
    <property type="match status" value="1"/>
</dbReference>
<dbReference type="PANTHER" id="PTHR34583:SF2">
    <property type="entry name" value="ANTIPORTER SUBUNIT MNHC2-RELATED"/>
    <property type="match status" value="1"/>
</dbReference>
<dbReference type="Pfam" id="PF00420">
    <property type="entry name" value="Oxidored_q2"/>
    <property type="match status" value="1"/>
</dbReference>
<proteinExistence type="inferred from homology"/>
<organism>
    <name type="scientific">Staphylococcus aureus (strain JH1)</name>
    <dbReference type="NCBI Taxonomy" id="359787"/>
    <lineage>
        <taxon>Bacteria</taxon>
        <taxon>Bacillati</taxon>
        <taxon>Bacillota</taxon>
        <taxon>Bacilli</taxon>
        <taxon>Bacillales</taxon>
        <taxon>Staphylococcaceae</taxon>
        <taxon>Staphylococcus</taxon>
    </lineage>
</organism>
<name>MNHC2_STAA2</name>
<protein>
    <recommendedName>
        <fullName>Putative antiporter subunit mnhC2</fullName>
    </recommendedName>
    <alternativeName>
        <fullName>Mrp complex subunit C2</fullName>
    </alternativeName>
    <alternativeName>
        <fullName>Putative NADH-ubiquinone oxidoreductase subunit mnhC2</fullName>
    </alternativeName>
</protein>
<accession>A6TZA1</accession>
<keyword id="KW-0050">Antiport</keyword>
<keyword id="KW-1003">Cell membrane</keyword>
<keyword id="KW-0406">Ion transport</keyword>
<keyword id="KW-0472">Membrane</keyword>
<keyword id="KW-0812">Transmembrane</keyword>
<keyword id="KW-1133">Transmembrane helix</keyword>
<keyword id="KW-0813">Transport</keyword>
<comment type="subunit">
    <text evidence="1">May form a heterooligomeric complex that consists of seven subunits: mnhA2, mnhB2, mnhC2, mnhD2, mnhE2, mnhF2 and mnhG2.</text>
</comment>
<comment type="subcellular location">
    <subcellularLocation>
        <location evidence="3">Cell membrane</location>
        <topology evidence="3">Multi-pass membrane protein</topology>
    </subcellularLocation>
</comment>
<comment type="similarity">
    <text evidence="3">Belongs to the CPA3 antiporters (TC 2.A.63) subunit C family.</text>
</comment>
<gene>
    <name type="primary">mnhC2</name>
    <name type="synonym">mrpC2</name>
    <name type="ordered locus">SaurJH1_0662</name>
</gene>
<sequence length="114" mass="12496">MNLILLLVIGFLVFIGTYMILSINLIRIVIGISIYTHAGNLIIMSMGTYGSSRSEPLITGGNQLFVDPLLQAIVLTAIVIGFGMTAFLLVLVYRTYKVTKEDEIEGLRGEDDAK</sequence>
<reference key="1">
    <citation type="submission" date="2007-06" db="EMBL/GenBank/DDBJ databases">
        <title>Complete sequence of chromosome of Staphylococcus aureus subsp. aureus JH1.</title>
        <authorList>
            <consortium name="US DOE Joint Genome Institute"/>
            <person name="Copeland A."/>
            <person name="Lucas S."/>
            <person name="Lapidus A."/>
            <person name="Barry K."/>
            <person name="Detter J.C."/>
            <person name="Glavina del Rio T."/>
            <person name="Hammon N."/>
            <person name="Israni S."/>
            <person name="Dalin E."/>
            <person name="Tice H."/>
            <person name="Pitluck S."/>
            <person name="Chain P."/>
            <person name="Malfatti S."/>
            <person name="Shin M."/>
            <person name="Vergez L."/>
            <person name="Schmutz J."/>
            <person name="Larimer F."/>
            <person name="Land M."/>
            <person name="Hauser L."/>
            <person name="Kyrpides N."/>
            <person name="Ivanova N."/>
            <person name="Tomasz A."/>
            <person name="Richardson P."/>
        </authorList>
    </citation>
    <scope>NUCLEOTIDE SEQUENCE [LARGE SCALE GENOMIC DNA]</scope>
    <source>
        <strain>JH1</strain>
    </source>
</reference>